<protein>
    <recommendedName>
        <fullName>Zinc finger and BTB domain-containing protein 18</fullName>
    </recommendedName>
    <alternativeName>
        <fullName>58 kDa repressor protein</fullName>
        <shortName>rRP58</shortName>
    </alternativeName>
    <alternativeName>
        <fullName>Transcriptional repressor RP58</fullName>
    </alternativeName>
    <alternativeName>
        <fullName>Zinc finger protein 238</fullName>
    </alternativeName>
</protein>
<gene>
    <name type="primary">Zbtb18</name>
    <name type="synonym">Rp58</name>
    <name type="synonym">Zfp238</name>
    <name type="synonym">Znf238</name>
</gene>
<evidence type="ECO:0000250" key="1"/>
<evidence type="ECO:0000250" key="2">
    <source>
        <dbReference type="UniProtKB" id="Q99592"/>
    </source>
</evidence>
<evidence type="ECO:0000255" key="3">
    <source>
        <dbReference type="PROSITE-ProRule" id="PRU00037"/>
    </source>
</evidence>
<evidence type="ECO:0000255" key="4">
    <source>
        <dbReference type="PROSITE-ProRule" id="PRU00042"/>
    </source>
</evidence>
<evidence type="ECO:0000256" key="5">
    <source>
        <dbReference type="SAM" id="MobiDB-lite"/>
    </source>
</evidence>
<evidence type="ECO:0000305" key="6"/>
<evidence type="ECO:0007744" key="7">
    <source>
    </source>
</evidence>
<organism>
    <name type="scientific">Rattus norvegicus</name>
    <name type="common">Rat</name>
    <dbReference type="NCBI Taxonomy" id="10116"/>
    <lineage>
        <taxon>Eukaryota</taxon>
        <taxon>Metazoa</taxon>
        <taxon>Chordata</taxon>
        <taxon>Craniata</taxon>
        <taxon>Vertebrata</taxon>
        <taxon>Euteleostomi</taxon>
        <taxon>Mammalia</taxon>
        <taxon>Eutheria</taxon>
        <taxon>Euarchontoglires</taxon>
        <taxon>Glires</taxon>
        <taxon>Rodentia</taxon>
        <taxon>Myomorpha</taxon>
        <taxon>Muroidea</taxon>
        <taxon>Muridae</taxon>
        <taxon>Murinae</taxon>
        <taxon>Rattus</taxon>
    </lineage>
</organism>
<name>ZBT18_RAT</name>
<reference key="1">
    <citation type="journal article" date="2001" name="Sheng Wu Hua Xue Yu Sheng Wu Wu Li Xue Bao">
        <title>Cloning and distribution of rRP58, a novel neuronal gene.</title>
        <authorList>
            <person name="Kang J.S."/>
            <person name="Yang Y.C."/>
            <person name="Liu H.L."/>
            <person name="Li Y.H."/>
            <person name="Du Y.C."/>
            <person name="Li R.X."/>
        </authorList>
    </citation>
    <scope>NUCLEOTIDE SEQUENCE [MRNA]</scope>
    <source>
        <strain>Sprague-Dawley</strain>
        <tissue>Brain</tissue>
    </source>
</reference>
<reference key="2">
    <citation type="journal article" date="2012" name="Nat. Commun.">
        <title>Quantitative maps of protein phosphorylation sites across 14 different rat organs and tissues.</title>
        <authorList>
            <person name="Lundby A."/>
            <person name="Secher A."/>
            <person name="Lage K."/>
            <person name="Nordsborg N.B."/>
            <person name="Dmytriyev A."/>
            <person name="Lundby C."/>
            <person name="Olsen J.V."/>
        </authorList>
    </citation>
    <scope>PHOSPHORYLATION [LARGE SCALE ANALYSIS] AT SER-157</scope>
    <scope>IDENTIFICATION BY MASS SPECTROMETRY [LARGE SCALE ANALYSIS]</scope>
</reference>
<keyword id="KW-0217">Developmental protein</keyword>
<keyword id="KW-0238">DNA-binding</keyword>
<keyword id="KW-1017">Isopeptide bond</keyword>
<keyword id="KW-0479">Metal-binding</keyword>
<keyword id="KW-0539">Nucleus</keyword>
<keyword id="KW-0597">Phosphoprotein</keyword>
<keyword id="KW-1185">Reference proteome</keyword>
<keyword id="KW-0677">Repeat</keyword>
<keyword id="KW-0678">Repressor</keyword>
<keyword id="KW-0804">Transcription</keyword>
<keyword id="KW-0805">Transcription regulation</keyword>
<keyword id="KW-0832">Ubl conjugation</keyword>
<keyword id="KW-0862">Zinc</keyword>
<keyword id="KW-0863">Zinc-finger</keyword>
<dbReference type="EMBL" id="AF221838">
    <property type="protein sequence ID" value="AAF34655.1"/>
    <property type="molecule type" value="mRNA"/>
</dbReference>
<dbReference type="RefSeq" id="NP_073169.1">
    <property type="nucleotide sequence ID" value="NM_022678.1"/>
</dbReference>
<dbReference type="SMR" id="Q9JKY3"/>
<dbReference type="FunCoup" id="Q9JKY3">
    <property type="interactions" value="1365"/>
</dbReference>
<dbReference type="STRING" id="10116.ENSRNOP00000005849"/>
<dbReference type="iPTMnet" id="Q9JKY3"/>
<dbReference type="PhosphoSitePlus" id="Q9JKY3"/>
<dbReference type="PaxDb" id="10116-ENSRNOP00000005849"/>
<dbReference type="GeneID" id="64619"/>
<dbReference type="KEGG" id="rno:64619"/>
<dbReference type="UCSC" id="RGD:621548">
    <property type="organism name" value="rat"/>
</dbReference>
<dbReference type="AGR" id="RGD:621548"/>
<dbReference type="CTD" id="10472"/>
<dbReference type="RGD" id="621548">
    <property type="gene designation" value="Zbtb18"/>
</dbReference>
<dbReference type="eggNOG" id="KOG1721">
    <property type="taxonomic scope" value="Eukaryota"/>
</dbReference>
<dbReference type="InParanoid" id="Q9JKY3"/>
<dbReference type="OrthoDB" id="4748970at2759"/>
<dbReference type="PhylomeDB" id="Q9JKY3"/>
<dbReference type="PRO" id="PR:Q9JKY3"/>
<dbReference type="Proteomes" id="UP000002494">
    <property type="component" value="Unplaced"/>
</dbReference>
<dbReference type="GO" id="GO:0000792">
    <property type="term" value="C:heterochromatin"/>
    <property type="evidence" value="ECO:0000266"/>
    <property type="project" value="RGD"/>
</dbReference>
<dbReference type="GO" id="GO:0005634">
    <property type="term" value="C:nucleus"/>
    <property type="evidence" value="ECO:0000266"/>
    <property type="project" value="RGD"/>
</dbReference>
<dbReference type="GO" id="GO:0000981">
    <property type="term" value="F:DNA-binding transcription factor activity, RNA polymerase II-specific"/>
    <property type="evidence" value="ECO:0000318"/>
    <property type="project" value="GO_Central"/>
</dbReference>
<dbReference type="GO" id="GO:0001227">
    <property type="term" value="F:DNA-binding transcription repressor activity, RNA polymerase II-specific"/>
    <property type="evidence" value="ECO:0000266"/>
    <property type="project" value="RGD"/>
</dbReference>
<dbReference type="GO" id="GO:0043565">
    <property type="term" value="F:sequence-specific DNA binding"/>
    <property type="evidence" value="ECO:0000250"/>
    <property type="project" value="UniProtKB"/>
</dbReference>
<dbReference type="GO" id="GO:1990837">
    <property type="term" value="F:sequence-specific double-stranded DNA binding"/>
    <property type="evidence" value="ECO:0000266"/>
    <property type="project" value="RGD"/>
</dbReference>
<dbReference type="GO" id="GO:0008270">
    <property type="term" value="F:zinc ion binding"/>
    <property type="evidence" value="ECO:0007669"/>
    <property type="project" value="UniProtKB-KW"/>
</dbReference>
<dbReference type="GO" id="GO:0021549">
    <property type="term" value="P:cerebellum development"/>
    <property type="evidence" value="ECO:0000266"/>
    <property type="project" value="RGD"/>
</dbReference>
<dbReference type="GO" id="GO:0021987">
    <property type="term" value="P:cerebral cortex development"/>
    <property type="evidence" value="ECO:0000266"/>
    <property type="project" value="RGD"/>
</dbReference>
<dbReference type="GO" id="GO:0021766">
    <property type="term" value="P:hippocampus development"/>
    <property type="evidence" value="ECO:0000266"/>
    <property type="project" value="RGD"/>
</dbReference>
<dbReference type="GO" id="GO:0048872">
    <property type="term" value="P:homeostasis of number of cells"/>
    <property type="evidence" value="ECO:0000266"/>
    <property type="project" value="RGD"/>
</dbReference>
<dbReference type="GO" id="GO:0001701">
    <property type="term" value="P:in utero embryonic development"/>
    <property type="evidence" value="ECO:0000266"/>
    <property type="project" value="RGD"/>
</dbReference>
<dbReference type="GO" id="GO:0045892">
    <property type="term" value="P:negative regulation of DNA-templated transcription"/>
    <property type="evidence" value="ECO:0000250"/>
    <property type="project" value="UniProtKB"/>
</dbReference>
<dbReference type="GO" id="GO:0000122">
    <property type="term" value="P:negative regulation of transcription by RNA polymerase II"/>
    <property type="evidence" value="ECO:0000250"/>
    <property type="project" value="UniProtKB"/>
</dbReference>
<dbReference type="GO" id="GO:0048666">
    <property type="term" value="P:neuron development"/>
    <property type="evidence" value="ECO:0000266"/>
    <property type="project" value="RGD"/>
</dbReference>
<dbReference type="GO" id="GO:0045944">
    <property type="term" value="P:positive regulation of transcription by RNA polymerase II"/>
    <property type="evidence" value="ECO:0000266"/>
    <property type="project" value="RGD"/>
</dbReference>
<dbReference type="GO" id="GO:0051302">
    <property type="term" value="P:regulation of cell division"/>
    <property type="evidence" value="ECO:0000266"/>
    <property type="project" value="RGD"/>
</dbReference>
<dbReference type="GO" id="GO:0006357">
    <property type="term" value="P:regulation of transcription by RNA polymerase II"/>
    <property type="evidence" value="ECO:0000318"/>
    <property type="project" value="GO_Central"/>
</dbReference>
<dbReference type="GO" id="GO:0007519">
    <property type="term" value="P:skeletal muscle tissue development"/>
    <property type="evidence" value="ECO:0000250"/>
    <property type="project" value="UniProtKB"/>
</dbReference>
<dbReference type="CDD" id="cd18324">
    <property type="entry name" value="BTB_POZ_ZBTB18_RP58"/>
    <property type="match status" value="1"/>
</dbReference>
<dbReference type="FunFam" id="3.30.160.60:FF:000114">
    <property type="entry name" value="Zinc finger and BTB domain-containing protein 18"/>
    <property type="match status" value="1"/>
</dbReference>
<dbReference type="FunFam" id="3.30.160.60:FF:000220">
    <property type="entry name" value="Zinc finger and BTB domain-containing protein 18"/>
    <property type="match status" value="1"/>
</dbReference>
<dbReference type="FunFam" id="3.30.710.10:FF:000021">
    <property type="entry name" value="Zinc finger and BTB domain-containing protein 18"/>
    <property type="match status" value="1"/>
</dbReference>
<dbReference type="FunFam" id="3.30.160.60:FF:000892">
    <property type="entry name" value="zinc finger and BTB domain-containing protein 3"/>
    <property type="match status" value="1"/>
</dbReference>
<dbReference type="Gene3D" id="3.30.160.60">
    <property type="entry name" value="Classic Zinc Finger"/>
    <property type="match status" value="3"/>
</dbReference>
<dbReference type="Gene3D" id="3.30.710.10">
    <property type="entry name" value="Potassium Channel Kv1.1, Chain A"/>
    <property type="match status" value="1"/>
</dbReference>
<dbReference type="InterPro" id="IPR000210">
    <property type="entry name" value="BTB/POZ_dom"/>
</dbReference>
<dbReference type="InterPro" id="IPR011333">
    <property type="entry name" value="SKP1/BTB/POZ_sf"/>
</dbReference>
<dbReference type="InterPro" id="IPR036236">
    <property type="entry name" value="Znf_C2H2_sf"/>
</dbReference>
<dbReference type="InterPro" id="IPR013087">
    <property type="entry name" value="Znf_C2H2_type"/>
</dbReference>
<dbReference type="PANTHER" id="PTHR24394:SF18">
    <property type="entry name" value="ZINC FINGER AND BTB DOMAIN-CONTAINING PROTEIN 18"/>
    <property type="match status" value="1"/>
</dbReference>
<dbReference type="PANTHER" id="PTHR24394">
    <property type="entry name" value="ZINC FINGER PROTEIN"/>
    <property type="match status" value="1"/>
</dbReference>
<dbReference type="Pfam" id="PF00651">
    <property type="entry name" value="BTB"/>
    <property type="match status" value="1"/>
</dbReference>
<dbReference type="Pfam" id="PF00096">
    <property type="entry name" value="zf-C2H2"/>
    <property type="match status" value="3"/>
</dbReference>
<dbReference type="Pfam" id="PF13894">
    <property type="entry name" value="zf-C2H2_4"/>
    <property type="match status" value="1"/>
</dbReference>
<dbReference type="SMART" id="SM00225">
    <property type="entry name" value="BTB"/>
    <property type="match status" value="1"/>
</dbReference>
<dbReference type="SMART" id="SM00355">
    <property type="entry name" value="ZnF_C2H2"/>
    <property type="match status" value="4"/>
</dbReference>
<dbReference type="SUPFAM" id="SSF57667">
    <property type="entry name" value="beta-beta-alpha zinc fingers"/>
    <property type="match status" value="3"/>
</dbReference>
<dbReference type="SUPFAM" id="SSF54695">
    <property type="entry name" value="POZ domain"/>
    <property type="match status" value="1"/>
</dbReference>
<dbReference type="PROSITE" id="PS50097">
    <property type="entry name" value="BTB"/>
    <property type="match status" value="1"/>
</dbReference>
<dbReference type="PROSITE" id="PS00028">
    <property type="entry name" value="ZINC_FINGER_C2H2_1"/>
    <property type="match status" value="4"/>
</dbReference>
<dbReference type="PROSITE" id="PS50157">
    <property type="entry name" value="ZINC_FINGER_C2H2_2"/>
    <property type="match status" value="4"/>
</dbReference>
<accession>Q9JKY3</accession>
<proteinExistence type="evidence at protein level"/>
<feature type="chain" id="PRO_0000047479" description="Zinc finger and BTB domain-containing protein 18">
    <location>
        <begin position="1"/>
        <end position="522"/>
    </location>
</feature>
<feature type="domain" description="BTB" evidence="3">
    <location>
        <begin position="24"/>
        <end position="91"/>
    </location>
</feature>
<feature type="zinc finger region" description="C2H2-type 1" evidence="4">
    <location>
        <begin position="370"/>
        <end position="392"/>
    </location>
</feature>
<feature type="zinc finger region" description="C2H2-type 2" evidence="4">
    <location>
        <begin position="410"/>
        <end position="432"/>
    </location>
</feature>
<feature type="zinc finger region" description="C2H2-type 3" evidence="4">
    <location>
        <begin position="438"/>
        <end position="460"/>
    </location>
</feature>
<feature type="zinc finger region" description="C2H2-type 4" evidence="4">
    <location>
        <begin position="466"/>
        <end position="489"/>
    </location>
</feature>
<feature type="region of interest" description="Disordered" evidence="5">
    <location>
        <begin position="121"/>
        <end position="166"/>
    </location>
</feature>
<feature type="region of interest" description="Interaction with DNMT3A" evidence="1">
    <location>
        <begin position="310"/>
        <end position="427"/>
    </location>
</feature>
<feature type="compositionally biased region" description="Basic and acidic residues" evidence="5">
    <location>
        <begin position="121"/>
        <end position="143"/>
    </location>
</feature>
<feature type="modified residue" description="Phosphoserine" evidence="7">
    <location>
        <position position="157"/>
    </location>
</feature>
<feature type="modified residue" description="Phosphoserine" evidence="2">
    <location>
        <position position="516"/>
    </location>
</feature>
<feature type="modified residue" description="Phosphoserine" evidence="2">
    <location>
        <position position="517"/>
    </location>
</feature>
<feature type="cross-link" description="Glycyl lysine isopeptide (Lys-Gly) (interchain with G-Cter in SUMO2)" evidence="2">
    <location>
        <position position="273"/>
    </location>
</feature>
<comment type="function">
    <text evidence="1">Transcriptional repressor that plays a role in various developmental processes such as myogenesis and brain development. Specifically binds the consensus DNA sequence 5'-[AC]ACATCTG[GT][AC]-3' which contains the E box core, and acts by recruiting chromatin remodeling multiprotein complexes. Plays a key role in myogenesis by directly repressing the expression of ID2 and ID3, 2 inhibitors of skeletal myogenesis. Also involved in controlling cell division of progenitor cells and regulating the survival of postmitotic cortical neurons. May also play a role in the organization of chromosomes in the nucleus (By similarity).</text>
</comment>
<comment type="subunit">
    <text evidence="1">Interacts with DNMT3A.</text>
</comment>
<comment type="subcellular location">
    <subcellularLocation>
        <location evidence="1">Nucleus</location>
    </subcellularLocation>
    <text evidence="1">Associates with condensed chromatin.</text>
</comment>
<comment type="similarity">
    <text evidence="6">Belongs to the krueppel C2H2-type zinc-finger protein family. ZBTB18 subfamily.</text>
</comment>
<sequence>MEFPDHSRHLLQCLSEQRHQGFLCDCTVLVGDAQFRAHRAVLASCSMYFHLFYKDQLDKRDIVHLNSDIVTAPAFALLLEFMYEGKLQFKDLPIEDVLAAASYLHMYDIVKVCKKKLKEKATTEADSTKKEEDASSCSDKVESLSDGSSHMAGDLPSDEDEGEDDKLNILPSKRDLAAEPGNMWMRLPSDAAGIPQAGGEAEPHATAAGKTVASPCSSTESLSQRSVTSVRDSADVDCVLDLSVKSSLSGVENLNSSYFSSQDVLRGNLVQVKVEKEASCDESDVGTNDYDMEHSTVKESVSANNRVQYEPAHLAPLREDSVLRELDREDKASDDEMMTPESERVQVEGGMESSLLPYVSNILSPAGQIFMCPLCNKVFPSPHILQIHLSTHFREQDGIRSKPAADVNVPTCSLCGKTFSCMYTLKRHERTHSGEKPYTCTQCGKSFQYSHNLSRHAVVHTREKPHACKWCERRFTQSGDLYRHIRKFHCELVNSLSVKSEALSLPTVRDWTLEDSSQELWR</sequence>